<name>RPOB_FLAJ1</name>
<evidence type="ECO:0000255" key="1">
    <source>
        <dbReference type="HAMAP-Rule" id="MF_01321"/>
    </source>
</evidence>
<feature type="chain" id="PRO_0000329177" description="DNA-directed RNA polymerase subunit beta">
    <location>
        <begin position="1"/>
        <end position="1270"/>
    </location>
</feature>
<comment type="function">
    <text evidence="1">DNA-dependent RNA polymerase catalyzes the transcription of DNA into RNA using the four ribonucleoside triphosphates as substrates.</text>
</comment>
<comment type="catalytic activity">
    <reaction evidence="1">
        <text>RNA(n) + a ribonucleoside 5'-triphosphate = RNA(n+1) + diphosphate</text>
        <dbReference type="Rhea" id="RHEA:21248"/>
        <dbReference type="Rhea" id="RHEA-COMP:14527"/>
        <dbReference type="Rhea" id="RHEA-COMP:17342"/>
        <dbReference type="ChEBI" id="CHEBI:33019"/>
        <dbReference type="ChEBI" id="CHEBI:61557"/>
        <dbReference type="ChEBI" id="CHEBI:140395"/>
        <dbReference type="EC" id="2.7.7.6"/>
    </reaction>
</comment>
<comment type="subunit">
    <text evidence="1">The RNAP catalytic core consists of 2 alpha, 1 beta, 1 beta' and 1 omega subunit. When a sigma factor is associated with the core the holoenzyme is formed, which can initiate transcription.</text>
</comment>
<comment type="similarity">
    <text evidence="1">Belongs to the RNA polymerase beta chain family.</text>
</comment>
<gene>
    <name evidence="1" type="primary">rpoB</name>
    <name type="ordered locus">Fjoh_1943</name>
</gene>
<accession>A5FIJ3</accession>
<reference key="1">
    <citation type="journal article" date="2009" name="Appl. Environ. Microbiol.">
        <title>Novel features of the polysaccharide-digesting gliding bacterium Flavobacterium johnsoniae as revealed by genome sequence analysis.</title>
        <authorList>
            <person name="McBride M.J."/>
            <person name="Xie G."/>
            <person name="Martens E.C."/>
            <person name="Lapidus A."/>
            <person name="Henrissat B."/>
            <person name="Rhodes R.G."/>
            <person name="Goltsman E."/>
            <person name="Wang W."/>
            <person name="Xu J."/>
            <person name="Hunnicutt D.W."/>
            <person name="Staroscik A.M."/>
            <person name="Hoover T.R."/>
            <person name="Cheng Y.Q."/>
            <person name="Stein J.L."/>
        </authorList>
    </citation>
    <scope>NUCLEOTIDE SEQUENCE [LARGE SCALE GENOMIC DNA]</scope>
    <source>
        <strain>ATCC 17061 / DSM 2064 / JCM 8514 / BCRC 14874 / CCUG 350202 / NBRC 14942 / NCIMB 11054 / UW101</strain>
    </source>
</reference>
<sequence>MITNQTERLNFASTKNIPDYPDFLDVQVKSFKDFFQLETKSDERGNEGLYNTFMENFPITDTRNNFVLEFLDYFVDPPRYTIQECIERGLTYSVPLKARLKLYCTDPEHEDFETIVQDVYLGTIPYMTPSGTFVINGAECVVVSQLHRSPGVFFGQSFHANGTKLYSARVIPFKGSWIEFSTDINSVMYAYIDRKKKLPVTTLFRAIGFERDKDILEIFDLAEEIKVSKTGIKKYIGRRLAARVLNTWHEDFVDEDTGEVVSIERNEIILDRDTIIDKDNVEEIIDSNVKSILLHKEDNNQADYAIIHNTLQKDPTNSEKEAVEHIYRQLRNAEPPDEETARGIIDKLFFSDQRYNLGEVGRYRMNKKLDLDIPMDKQVLTKEDIITIVKYLIELINSKAEIDDIDHLSNRRVRTVGEQLSQQFGVGLARMARTIRERMNVRDNEVFTPIDLINAKTLSSVINSFFGTNQLSQFMDQTNPLAEITHKRRLSALGPGGLSRERAGFEVRDVHYTHYGRLCPIETPEGPNIGLISSLGVYAKVNGMGFIETPYRKVTDGVVDLESAPIYLSAEEEEGKMIAQANIEMDASGKITASNVIAREEGDFPVVEPSSVHYTDVAPNQIASISASLIPFLEHDDANRALMGSNMMRQAVPLIRPEAPIVGTGLERQVASDSRVLINAEGHGTVEYVDANIITIKYDRTEDERMVSFDADEKTYNLIKFRKTNQGTSINLKPIVRRGDRVVPGQVLSEGYATQNGELALGRNLKVAFMPWKGYNFEDAIVISEKVVRDDIFTSIHVDDYSLEVRDTKLGNEELTNDIPNVSEEATKDLDENGMIRIGAEVKPGDILIGKITPKGESDPTPEEKLLRAIFGDKAGDVKDASLKASPSLHGVVLDKKLFARAVKDKRKRTQDKDALGALEMEFETKFVELKDRLVEKLFLIVNGKTSQGVMNDLGEEVLPKGKKYTQKMLYAVEDFAHLSKGQWVADDATNKMVNDLIHNYKIKLNDLQGALRREKFTITVGDELPSGILKLAKIYIAKKRKLKVGDKMAGRHGNKGIVARIVRHEDMPFLEDGTPVDIVLNPLGVPSRMNIGQIYETVLGWAGMNLGRKFATPIFDGASLDEINALTDEANVPRFGHTYLYDGGTGERFAQKATVGVIYMLKLGHMVDDKMHARSIGPYSLITQQPLGGKAQFGGQRFGEMEVWALEAYGASSTLREILTVKSDDVIGRAKTYEAIVKGETMPEPGLPESFNVLMHELKGLGLDLRLEE</sequence>
<organism>
    <name type="scientific">Flavobacterium johnsoniae (strain ATCC 17061 / DSM 2064 / JCM 8514 / BCRC 14874 / CCUG 350202 / NBRC 14942 / NCIMB 11054 / UW101)</name>
    <name type="common">Cytophaga johnsonae</name>
    <dbReference type="NCBI Taxonomy" id="376686"/>
    <lineage>
        <taxon>Bacteria</taxon>
        <taxon>Pseudomonadati</taxon>
        <taxon>Bacteroidota</taxon>
        <taxon>Flavobacteriia</taxon>
        <taxon>Flavobacteriales</taxon>
        <taxon>Flavobacteriaceae</taxon>
        <taxon>Flavobacterium</taxon>
    </lineage>
</organism>
<keyword id="KW-0240">DNA-directed RNA polymerase</keyword>
<keyword id="KW-0548">Nucleotidyltransferase</keyword>
<keyword id="KW-0804">Transcription</keyword>
<keyword id="KW-0808">Transferase</keyword>
<proteinExistence type="inferred from homology"/>
<protein>
    <recommendedName>
        <fullName evidence="1">DNA-directed RNA polymerase subunit beta</fullName>
        <shortName evidence="1">RNAP subunit beta</shortName>
        <ecNumber evidence="1">2.7.7.6</ecNumber>
    </recommendedName>
    <alternativeName>
        <fullName evidence="1">RNA polymerase subunit beta</fullName>
    </alternativeName>
    <alternativeName>
        <fullName evidence="1">Transcriptase subunit beta</fullName>
    </alternativeName>
</protein>
<dbReference type="EC" id="2.7.7.6" evidence="1"/>
<dbReference type="EMBL" id="CP000685">
    <property type="protein sequence ID" value="ABQ04975.1"/>
    <property type="molecule type" value="Genomic_DNA"/>
</dbReference>
<dbReference type="RefSeq" id="WP_012024015.1">
    <property type="nucleotide sequence ID" value="NC_009441.1"/>
</dbReference>
<dbReference type="SMR" id="A5FIJ3"/>
<dbReference type="STRING" id="376686.Fjoh_1943"/>
<dbReference type="KEGG" id="fjo:Fjoh_1943"/>
<dbReference type="eggNOG" id="COG0085">
    <property type="taxonomic scope" value="Bacteria"/>
</dbReference>
<dbReference type="HOGENOM" id="CLU_000524_4_1_10"/>
<dbReference type="OrthoDB" id="9803954at2"/>
<dbReference type="Proteomes" id="UP000006694">
    <property type="component" value="Chromosome"/>
</dbReference>
<dbReference type="GO" id="GO:0000428">
    <property type="term" value="C:DNA-directed RNA polymerase complex"/>
    <property type="evidence" value="ECO:0007669"/>
    <property type="project" value="UniProtKB-KW"/>
</dbReference>
<dbReference type="GO" id="GO:0003677">
    <property type="term" value="F:DNA binding"/>
    <property type="evidence" value="ECO:0007669"/>
    <property type="project" value="UniProtKB-UniRule"/>
</dbReference>
<dbReference type="GO" id="GO:0003899">
    <property type="term" value="F:DNA-directed RNA polymerase activity"/>
    <property type="evidence" value="ECO:0007669"/>
    <property type="project" value="UniProtKB-UniRule"/>
</dbReference>
<dbReference type="GO" id="GO:0032549">
    <property type="term" value="F:ribonucleoside binding"/>
    <property type="evidence" value="ECO:0007669"/>
    <property type="project" value="InterPro"/>
</dbReference>
<dbReference type="GO" id="GO:0006351">
    <property type="term" value="P:DNA-templated transcription"/>
    <property type="evidence" value="ECO:0007669"/>
    <property type="project" value="UniProtKB-UniRule"/>
</dbReference>
<dbReference type="CDD" id="cd00653">
    <property type="entry name" value="RNA_pol_B_RPB2"/>
    <property type="match status" value="1"/>
</dbReference>
<dbReference type="Gene3D" id="2.40.50.100">
    <property type="match status" value="1"/>
</dbReference>
<dbReference type="Gene3D" id="2.40.50.150">
    <property type="match status" value="1"/>
</dbReference>
<dbReference type="Gene3D" id="3.90.1100.10">
    <property type="match status" value="2"/>
</dbReference>
<dbReference type="Gene3D" id="2.30.150.10">
    <property type="entry name" value="DNA-directed RNA polymerase, beta subunit, external 1 domain"/>
    <property type="match status" value="1"/>
</dbReference>
<dbReference type="Gene3D" id="2.40.270.10">
    <property type="entry name" value="DNA-directed RNA polymerase, subunit 2, domain 6"/>
    <property type="match status" value="3"/>
</dbReference>
<dbReference type="Gene3D" id="3.90.1800.10">
    <property type="entry name" value="RNA polymerase alpha subunit dimerisation domain"/>
    <property type="match status" value="1"/>
</dbReference>
<dbReference type="Gene3D" id="3.90.1110.10">
    <property type="entry name" value="RNA polymerase Rpb2, domain 2"/>
    <property type="match status" value="2"/>
</dbReference>
<dbReference type="HAMAP" id="MF_01321">
    <property type="entry name" value="RNApol_bact_RpoB"/>
    <property type="match status" value="1"/>
</dbReference>
<dbReference type="InterPro" id="IPR042107">
    <property type="entry name" value="DNA-dir_RNA_pol_bsu_ext_1_sf"/>
</dbReference>
<dbReference type="InterPro" id="IPR019462">
    <property type="entry name" value="DNA-dir_RNA_pol_bsu_external_1"/>
</dbReference>
<dbReference type="InterPro" id="IPR015712">
    <property type="entry name" value="DNA-dir_RNA_pol_su2"/>
</dbReference>
<dbReference type="InterPro" id="IPR007120">
    <property type="entry name" value="DNA-dir_RNAP_su2_dom"/>
</dbReference>
<dbReference type="InterPro" id="IPR037033">
    <property type="entry name" value="DNA-dir_RNAP_su2_hyb_sf"/>
</dbReference>
<dbReference type="InterPro" id="IPR010243">
    <property type="entry name" value="RNA_pol_bsu_bac"/>
</dbReference>
<dbReference type="InterPro" id="IPR007121">
    <property type="entry name" value="RNA_pol_bsu_CS"/>
</dbReference>
<dbReference type="InterPro" id="IPR007644">
    <property type="entry name" value="RNA_pol_bsu_protrusion"/>
</dbReference>
<dbReference type="InterPro" id="IPR007642">
    <property type="entry name" value="RNA_pol_Rpb2_2"/>
</dbReference>
<dbReference type="InterPro" id="IPR037034">
    <property type="entry name" value="RNA_pol_Rpb2_2_sf"/>
</dbReference>
<dbReference type="InterPro" id="IPR007645">
    <property type="entry name" value="RNA_pol_Rpb2_3"/>
</dbReference>
<dbReference type="InterPro" id="IPR007641">
    <property type="entry name" value="RNA_pol_Rpb2_7"/>
</dbReference>
<dbReference type="InterPro" id="IPR014724">
    <property type="entry name" value="RNA_pol_RPB2_OB-fold"/>
</dbReference>
<dbReference type="NCBIfam" id="NF001616">
    <property type="entry name" value="PRK00405.1"/>
    <property type="match status" value="1"/>
</dbReference>
<dbReference type="NCBIfam" id="TIGR02013">
    <property type="entry name" value="rpoB"/>
    <property type="match status" value="1"/>
</dbReference>
<dbReference type="PANTHER" id="PTHR20856">
    <property type="entry name" value="DNA-DIRECTED RNA POLYMERASE I SUBUNIT 2"/>
    <property type="match status" value="1"/>
</dbReference>
<dbReference type="Pfam" id="PF04563">
    <property type="entry name" value="RNA_pol_Rpb2_1"/>
    <property type="match status" value="1"/>
</dbReference>
<dbReference type="Pfam" id="PF04561">
    <property type="entry name" value="RNA_pol_Rpb2_2"/>
    <property type="match status" value="2"/>
</dbReference>
<dbReference type="Pfam" id="PF04565">
    <property type="entry name" value="RNA_pol_Rpb2_3"/>
    <property type="match status" value="1"/>
</dbReference>
<dbReference type="Pfam" id="PF10385">
    <property type="entry name" value="RNA_pol_Rpb2_45"/>
    <property type="match status" value="1"/>
</dbReference>
<dbReference type="Pfam" id="PF00562">
    <property type="entry name" value="RNA_pol_Rpb2_6"/>
    <property type="match status" value="1"/>
</dbReference>
<dbReference type="Pfam" id="PF04560">
    <property type="entry name" value="RNA_pol_Rpb2_7"/>
    <property type="match status" value="1"/>
</dbReference>
<dbReference type="SUPFAM" id="SSF64484">
    <property type="entry name" value="beta and beta-prime subunits of DNA dependent RNA-polymerase"/>
    <property type="match status" value="1"/>
</dbReference>
<dbReference type="PROSITE" id="PS01166">
    <property type="entry name" value="RNA_POL_BETA"/>
    <property type="match status" value="1"/>
</dbReference>